<comment type="catalytic activity">
    <reaction evidence="1">
        <text>urea + 2 H2O + H(+) = hydrogencarbonate + 2 NH4(+)</text>
        <dbReference type="Rhea" id="RHEA:20557"/>
        <dbReference type="ChEBI" id="CHEBI:15377"/>
        <dbReference type="ChEBI" id="CHEBI:15378"/>
        <dbReference type="ChEBI" id="CHEBI:16199"/>
        <dbReference type="ChEBI" id="CHEBI:17544"/>
        <dbReference type="ChEBI" id="CHEBI:28938"/>
        <dbReference type="EC" id="3.5.1.5"/>
    </reaction>
</comment>
<comment type="cofactor">
    <cofactor evidence="1">
        <name>Ni cation</name>
        <dbReference type="ChEBI" id="CHEBI:25516"/>
    </cofactor>
    <text evidence="1">Binds 2 nickel ions per subunit.</text>
</comment>
<comment type="pathway">
    <text evidence="1">Nitrogen metabolism; urea degradation; CO(2) and NH(3) from urea (urease route): step 1/1.</text>
</comment>
<comment type="subunit">
    <text evidence="1">Heterotrimer of UreA (gamma), UreB (beta) and UreC (alpha) subunits. Three heterotrimers associate to form the active enzyme.</text>
</comment>
<comment type="subcellular location">
    <subcellularLocation>
        <location evidence="1">Cytoplasm</location>
    </subcellularLocation>
</comment>
<comment type="PTM">
    <text evidence="1">Carboxylation allows a single lysine to coordinate two nickel ions.</text>
</comment>
<comment type="similarity">
    <text evidence="1">Belongs to the metallo-dependent hydrolases superfamily. Urease alpha subunit family.</text>
</comment>
<name>URE1_SINMW</name>
<feature type="chain" id="PRO_1000070696" description="Urease subunit alpha">
    <location>
        <begin position="1"/>
        <end position="570"/>
    </location>
</feature>
<feature type="domain" description="Urease" evidence="1">
    <location>
        <begin position="131"/>
        <end position="570"/>
    </location>
</feature>
<feature type="active site" description="Proton donor" evidence="1">
    <location>
        <position position="322"/>
    </location>
</feature>
<feature type="binding site" evidence="1">
    <location>
        <position position="136"/>
    </location>
    <ligand>
        <name>Ni(2+)</name>
        <dbReference type="ChEBI" id="CHEBI:49786"/>
        <label>1</label>
    </ligand>
</feature>
<feature type="binding site" evidence="1">
    <location>
        <position position="138"/>
    </location>
    <ligand>
        <name>Ni(2+)</name>
        <dbReference type="ChEBI" id="CHEBI:49786"/>
        <label>1</label>
    </ligand>
</feature>
<feature type="binding site" description="via carbamate group" evidence="1">
    <location>
        <position position="219"/>
    </location>
    <ligand>
        <name>Ni(2+)</name>
        <dbReference type="ChEBI" id="CHEBI:49786"/>
        <label>1</label>
    </ligand>
</feature>
<feature type="binding site" description="via carbamate group" evidence="1">
    <location>
        <position position="219"/>
    </location>
    <ligand>
        <name>Ni(2+)</name>
        <dbReference type="ChEBI" id="CHEBI:49786"/>
        <label>2</label>
    </ligand>
</feature>
<feature type="binding site" evidence="1">
    <location>
        <position position="221"/>
    </location>
    <ligand>
        <name>substrate</name>
    </ligand>
</feature>
<feature type="binding site" evidence="1">
    <location>
        <position position="248"/>
    </location>
    <ligand>
        <name>Ni(2+)</name>
        <dbReference type="ChEBI" id="CHEBI:49786"/>
        <label>2</label>
    </ligand>
</feature>
<feature type="binding site" evidence="1">
    <location>
        <position position="274"/>
    </location>
    <ligand>
        <name>Ni(2+)</name>
        <dbReference type="ChEBI" id="CHEBI:49786"/>
        <label>2</label>
    </ligand>
</feature>
<feature type="binding site" evidence="1">
    <location>
        <position position="362"/>
    </location>
    <ligand>
        <name>Ni(2+)</name>
        <dbReference type="ChEBI" id="CHEBI:49786"/>
        <label>1</label>
    </ligand>
</feature>
<feature type="modified residue" description="N6-carboxylysine" evidence="1">
    <location>
        <position position="219"/>
    </location>
</feature>
<proteinExistence type="inferred from homology"/>
<reference key="1">
    <citation type="submission" date="2007-06" db="EMBL/GenBank/DDBJ databases">
        <title>Complete sequence of Sinorhizobium medicae WSM419 chromosome.</title>
        <authorList>
            <consortium name="US DOE Joint Genome Institute"/>
            <person name="Copeland A."/>
            <person name="Lucas S."/>
            <person name="Lapidus A."/>
            <person name="Barry K."/>
            <person name="Glavina del Rio T."/>
            <person name="Dalin E."/>
            <person name="Tice H."/>
            <person name="Pitluck S."/>
            <person name="Chain P."/>
            <person name="Malfatti S."/>
            <person name="Shin M."/>
            <person name="Vergez L."/>
            <person name="Schmutz J."/>
            <person name="Larimer F."/>
            <person name="Land M."/>
            <person name="Hauser L."/>
            <person name="Kyrpides N."/>
            <person name="Mikhailova N."/>
            <person name="Reeve W.G."/>
            <person name="Richardson P."/>
        </authorList>
    </citation>
    <scope>NUCLEOTIDE SEQUENCE [LARGE SCALE GENOMIC DNA]</scope>
    <source>
        <strain>WSM419</strain>
    </source>
</reference>
<accession>A6UC35</accession>
<dbReference type="EC" id="3.5.1.5" evidence="1"/>
<dbReference type="EMBL" id="CP000738">
    <property type="protein sequence ID" value="ABR61215.1"/>
    <property type="molecule type" value="Genomic_DNA"/>
</dbReference>
<dbReference type="RefSeq" id="WP_012066606.1">
    <property type="nucleotide sequence ID" value="NC_009636.1"/>
</dbReference>
<dbReference type="RefSeq" id="YP_001328050.1">
    <property type="nucleotide sequence ID" value="NC_009636.1"/>
</dbReference>
<dbReference type="SMR" id="A6UC35"/>
<dbReference type="STRING" id="366394.Smed_2383"/>
<dbReference type="MEROPS" id="M38.982"/>
<dbReference type="KEGG" id="smd:Smed_2383"/>
<dbReference type="PATRIC" id="fig|366394.8.peg.5566"/>
<dbReference type="eggNOG" id="COG0804">
    <property type="taxonomic scope" value="Bacteria"/>
</dbReference>
<dbReference type="HOGENOM" id="CLU_000980_0_0_5"/>
<dbReference type="OrthoDB" id="9802793at2"/>
<dbReference type="UniPathway" id="UPA00258">
    <property type="reaction ID" value="UER00370"/>
</dbReference>
<dbReference type="Proteomes" id="UP000001108">
    <property type="component" value="Chromosome"/>
</dbReference>
<dbReference type="GO" id="GO:0005737">
    <property type="term" value="C:cytoplasm"/>
    <property type="evidence" value="ECO:0007669"/>
    <property type="project" value="UniProtKB-SubCell"/>
</dbReference>
<dbReference type="GO" id="GO:0016151">
    <property type="term" value="F:nickel cation binding"/>
    <property type="evidence" value="ECO:0007669"/>
    <property type="project" value="UniProtKB-UniRule"/>
</dbReference>
<dbReference type="GO" id="GO:0009039">
    <property type="term" value="F:urease activity"/>
    <property type="evidence" value="ECO:0007669"/>
    <property type="project" value="UniProtKB-UniRule"/>
</dbReference>
<dbReference type="GO" id="GO:0043419">
    <property type="term" value="P:urea catabolic process"/>
    <property type="evidence" value="ECO:0007669"/>
    <property type="project" value="UniProtKB-UniRule"/>
</dbReference>
<dbReference type="CDD" id="cd00375">
    <property type="entry name" value="Urease_alpha"/>
    <property type="match status" value="1"/>
</dbReference>
<dbReference type="Gene3D" id="3.20.20.140">
    <property type="entry name" value="Metal-dependent hydrolases"/>
    <property type="match status" value="1"/>
</dbReference>
<dbReference type="Gene3D" id="2.30.40.10">
    <property type="entry name" value="Urease, subunit C, domain 1"/>
    <property type="match status" value="1"/>
</dbReference>
<dbReference type="HAMAP" id="MF_01953">
    <property type="entry name" value="Urease_alpha"/>
    <property type="match status" value="1"/>
</dbReference>
<dbReference type="InterPro" id="IPR006680">
    <property type="entry name" value="Amidohydro-rel"/>
</dbReference>
<dbReference type="InterPro" id="IPR011059">
    <property type="entry name" value="Metal-dep_hydrolase_composite"/>
</dbReference>
<dbReference type="InterPro" id="IPR032466">
    <property type="entry name" value="Metal_Hydrolase"/>
</dbReference>
<dbReference type="InterPro" id="IPR011612">
    <property type="entry name" value="Urease_alpha_N_dom"/>
</dbReference>
<dbReference type="InterPro" id="IPR050112">
    <property type="entry name" value="Urease_alpha_subunit"/>
</dbReference>
<dbReference type="InterPro" id="IPR017950">
    <property type="entry name" value="Urease_AS"/>
</dbReference>
<dbReference type="InterPro" id="IPR005848">
    <property type="entry name" value="Urease_asu"/>
</dbReference>
<dbReference type="InterPro" id="IPR017951">
    <property type="entry name" value="Urease_asu_c"/>
</dbReference>
<dbReference type="InterPro" id="IPR029754">
    <property type="entry name" value="Urease_Ni-bd"/>
</dbReference>
<dbReference type="NCBIfam" id="NF009685">
    <property type="entry name" value="PRK13206.1"/>
    <property type="match status" value="1"/>
</dbReference>
<dbReference type="NCBIfam" id="NF009686">
    <property type="entry name" value="PRK13207.1"/>
    <property type="match status" value="1"/>
</dbReference>
<dbReference type="NCBIfam" id="TIGR01792">
    <property type="entry name" value="urease_alph"/>
    <property type="match status" value="1"/>
</dbReference>
<dbReference type="PANTHER" id="PTHR43440">
    <property type="entry name" value="UREASE"/>
    <property type="match status" value="1"/>
</dbReference>
<dbReference type="PANTHER" id="PTHR43440:SF1">
    <property type="entry name" value="UREASE"/>
    <property type="match status" value="1"/>
</dbReference>
<dbReference type="Pfam" id="PF01979">
    <property type="entry name" value="Amidohydro_1"/>
    <property type="match status" value="1"/>
</dbReference>
<dbReference type="Pfam" id="PF00449">
    <property type="entry name" value="Urease_alpha"/>
    <property type="match status" value="1"/>
</dbReference>
<dbReference type="PRINTS" id="PR01752">
    <property type="entry name" value="UREASE"/>
</dbReference>
<dbReference type="SUPFAM" id="SSF51338">
    <property type="entry name" value="Composite domain of metallo-dependent hydrolases"/>
    <property type="match status" value="2"/>
</dbReference>
<dbReference type="SUPFAM" id="SSF51556">
    <property type="entry name" value="Metallo-dependent hydrolases"/>
    <property type="match status" value="1"/>
</dbReference>
<dbReference type="PROSITE" id="PS01120">
    <property type="entry name" value="UREASE_1"/>
    <property type="match status" value="1"/>
</dbReference>
<dbReference type="PROSITE" id="PS00145">
    <property type="entry name" value="UREASE_2"/>
    <property type="match status" value="1"/>
</dbReference>
<dbReference type="PROSITE" id="PS51368">
    <property type="entry name" value="UREASE_3"/>
    <property type="match status" value="1"/>
</dbReference>
<protein>
    <recommendedName>
        <fullName evidence="1">Urease subunit alpha</fullName>
        <ecNumber evidence="1">3.5.1.5</ecNumber>
    </recommendedName>
    <alternativeName>
        <fullName evidence="1">Urea amidohydrolase subunit alpha</fullName>
    </alternativeName>
</protein>
<sequence length="570" mass="60532">MSYKMSRAAYANMFGPTVGDKVRLADTELFIEVERDFTTHGEEVKFGGGKVIRDGMGQSQVTREGGAVDTVITNALIVDHWGIVKADIGLKDGRISAIGKAGNPDTQAGVTIIVGPGTEVIAGEGKIVTAGGMDSHIHFICPQQIDEALMSGITCMLGGGTGPAHGTLATTCTPGPWHIARMIEAADAFPMNLAFAGKGNASLPGALVEMVLGGATSLKLHEDWGTTPAAIDCCLSVADEYDVQVMIHTDTLNESGFVEDTIAAIKGRTIHAYHTEGAGGGHAPDIIRICGQPNVIPSSTNPTRPYTVNTLAEHLDMLMVCHHLSPSIPEDIAFAESRIRKETIAAEDILHDIGAFSIISSDSQAMGRVGEVAIRTWQTADKMKRQRGRLKEESGGNDNFRVKRYIAKYTINPAIAHGLSHEIGSLETGKRADLVLWNPTFFGVKPDMVLLGGTIAAAPMGDPNASIPTPQPVHYRPMFGAYGKSRTNSSVTFVSQASLDAGLAGRLGVAKALVAVQNTRGGIGKASMVHNSLTPHIEVDPETYEVRANGELLTCEPASVLPMAQRYFLF</sequence>
<evidence type="ECO:0000255" key="1">
    <source>
        <dbReference type="HAMAP-Rule" id="MF_01953"/>
    </source>
</evidence>
<gene>
    <name evidence="1" type="primary">ureC</name>
    <name type="ordered locus">Smed_2383</name>
</gene>
<keyword id="KW-0963">Cytoplasm</keyword>
<keyword id="KW-0378">Hydrolase</keyword>
<keyword id="KW-0479">Metal-binding</keyword>
<keyword id="KW-0533">Nickel</keyword>
<organism>
    <name type="scientific">Sinorhizobium medicae (strain WSM419)</name>
    <name type="common">Ensifer medicae</name>
    <dbReference type="NCBI Taxonomy" id="366394"/>
    <lineage>
        <taxon>Bacteria</taxon>
        <taxon>Pseudomonadati</taxon>
        <taxon>Pseudomonadota</taxon>
        <taxon>Alphaproteobacteria</taxon>
        <taxon>Hyphomicrobiales</taxon>
        <taxon>Rhizobiaceae</taxon>
        <taxon>Sinorhizobium/Ensifer group</taxon>
        <taxon>Sinorhizobium</taxon>
    </lineage>
</organism>